<name>RS12_SODGM</name>
<comment type="function">
    <text evidence="2">With S4 and S5 plays an important role in translational accuracy.</text>
</comment>
<comment type="function">
    <text evidence="2">Interacts with and stabilizes bases of the 16S rRNA that are involved in tRNA selection in the A site and with the mRNA backbone. Located at the interface of the 30S and 50S subunits, it traverses the body of the 30S subunit contacting proteins on the other side and probably holding the rRNA structure together. The combined cluster of proteins S8, S12 and S17 appears to hold together the shoulder and platform of the 30S subunit.</text>
</comment>
<comment type="subunit">
    <text evidence="2">Part of the 30S ribosomal subunit. Contacts proteins S8 and S17. May interact with IF1 in the 30S initiation complex.</text>
</comment>
<comment type="similarity">
    <text evidence="2">Belongs to the universal ribosomal protein uS12 family.</text>
</comment>
<sequence>MATINQLVRKPRSMKVAKSNVPALDACPQKRGVCTRVYTTTPKKPNSALRKVCRVRLTNGFEVTSYIGGEGHNLQEHSVILIRGGRVKDLPGVRYHTVRGALDCSGVKDRKQGRSKYGVKKPKA</sequence>
<dbReference type="EMBL" id="AP008232">
    <property type="protein sequence ID" value="BAE75561.1"/>
    <property type="molecule type" value="Genomic_DNA"/>
</dbReference>
<dbReference type="RefSeq" id="WP_011412094.1">
    <property type="nucleotide sequence ID" value="NZ_LN854557.1"/>
</dbReference>
<dbReference type="SMR" id="Q2NQL4"/>
<dbReference type="STRING" id="343509.SG2286"/>
<dbReference type="KEGG" id="sgl:SG2286"/>
<dbReference type="eggNOG" id="COG0048">
    <property type="taxonomic scope" value="Bacteria"/>
</dbReference>
<dbReference type="HOGENOM" id="CLU_104295_1_2_6"/>
<dbReference type="OrthoDB" id="9802366at2"/>
<dbReference type="BioCyc" id="SGLO343509:SGP1_RS20885-MONOMER"/>
<dbReference type="Proteomes" id="UP000001932">
    <property type="component" value="Chromosome"/>
</dbReference>
<dbReference type="GO" id="GO:0015935">
    <property type="term" value="C:small ribosomal subunit"/>
    <property type="evidence" value="ECO:0007669"/>
    <property type="project" value="InterPro"/>
</dbReference>
<dbReference type="GO" id="GO:0019843">
    <property type="term" value="F:rRNA binding"/>
    <property type="evidence" value="ECO:0007669"/>
    <property type="project" value="UniProtKB-UniRule"/>
</dbReference>
<dbReference type="GO" id="GO:0003735">
    <property type="term" value="F:structural constituent of ribosome"/>
    <property type="evidence" value="ECO:0007669"/>
    <property type="project" value="InterPro"/>
</dbReference>
<dbReference type="GO" id="GO:0000049">
    <property type="term" value="F:tRNA binding"/>
    <property type="evidence" value="ECO:0007669"/>
    <property type="project" value="UniProtKB-UniRule"/>
</dbReference>
<dbReference type="GO" id="GO:0006412">
    <property type="term" value="P:translation"/>
    <property type="evidence" value="ECO:0007669"/>
    <property type="project" value="UniProtKB-UniRule"/>
</dbReference>
<dbReference type="CDD" id="cd03368">
    <property type="entry name" value="Ribosomal_S12"/>
    <property type="match status" value="1"/>
</dbReference>
<dbReference type="FunFam" id="2.40.50.140:FF:000001">
    <property type="entry name" value="30S ribosomal protein S12"/>
    <property type="match status" value="1"/>
</dbReference>
<dbReference type="Gene3D" id="2.40.50.140">
    <property type="entry name" value="Nucleic acid-binding proteins"/>
    <property type="match status" value="1"/>
</dbReference>
<dbReference type="HAMAP" id="MF_00403_B">
    <property type="entry name" value="Ribosomal_uS12_B"/>
    <property type="match status" value="1"/>
</dbReference>
<dbReference type="InterPro" id="IPR012340">
    <property type="entry name" value="NA-bd_OB-fold"/>
</dbReference>
<dbReference type="InterPro" id="IPR006032">
    <property type="entry name" value="Ribosomal_uS12"/>
</dbReference>
<dbReference type="InterPro" id="IPR005679">
    <property type="entry name" value="Ribosomal_uS12_bac"/>
</dbReference>
<dbReference type="NCBIfam" id="TIGR00981">
    <property type="entry name" value="rpsL_bact"/>
    <property type="match status" value="1"/>
</dbReference>
<dbReference type="PANTHER" id="PTHR11652">
    <property type="entry name" value="30S RIBOSOMAL PROTEIN S12 FAMILY MEMBER"/>
    <property type="match status" value="1"/>
</dbReference>
<dbReference type="Pfam" id="PF00164">
    <property type="entry name" value="Ribosom_S12_S23"/>
    <property type="match status" value="1"/>
</dbReference>
<dbReference type="PIRSF" id="PIRSF002133">
    <property type="entry name" value="Ribosomal_S12/S23"/>
    <property type="match status" value="1"/>
</dbReference>
<dbReference type="PRINTS" id="PR01034">
    <property type="entry name" value="RIBOSOMALS12"/>
</dbReference>
<dbReference type="SUPFAM" id="SSF50249">
    <property type="entry name" value="Nucleic acid-binding proteins"/>
    <property type="match status" value="1"/>
</dbReference>
<dbReference type="PROSITE" id="PS00055">
    <property type="entry name" value="RIBOSOMAL_S12"/>
    <property type="match status" value="1"/>
</dbReference>
<evidence type="ECO:0000250" key="1"/>
<evidence type="ECO:0000255" key="2">
    <source>
        <dbReference type="HAMAP-Rule" id="MF_00403"/>
    </source>
</evidence>
<evidence type="ECO:0000305" key="3"/>
<feature type="chain" id="PRO_0000238143" description="Small ribosomal subunit protein uS12">
    <location>
        <begin position="1"/>
        <end position="124"/>
    </location>
</feature>
<feature type="modified residue" description="3-methylthioaspartic acid" evidence="1">
    <location>
        <position position="89"/>
    </location>
</feature>
<gene>
    <name evidence="2" type="primary">rpsL</name>
    <name type="ordered locus">SG2286</name>
</gene>
<accession>Q2NQL4</accession>
<organism>
    <name type="scientific">Sodalis glossinidius (strain morsitans)</name>
    <dbReference type="NCBI Taxonomy" id="343509"/>
    <lineage>
        <taxon>Bacteria</taxon>
        <taxon>Pseudomonadati</taxon>
        <taxon>Pseudomonadota</taxon>
        <taxon>Gammaproteobacteria</taxon>
        <taxon>Enterobacterales</taxon>
        <taxon>Bruguierivoracaceae</taxon>
        <taxon>Sodalis</taxon>
    </lineage>
</organism>
<reference key="1">
    <citation type="journal article" date="2006" name="Genome Res.">
        <title>Massive genome erosion and functional adaptations provide insights into the symbiotic lifestyle of Sodalis glossinidius in the tsetse host.</title>
        <authorList>
            <person name="Toh H."/>
            <person name="Weiss B.L."/>
            <person name="Perkin S.A.H."/>
            <person name="Yamashita A."/>
            <person name="Oshima K."/>
            <person name="Hattori M."/>
            <person name="Aksoy S."/>
        </authorList>
    </citation>
    <scope>NUCLEOTIDE SEQUENCE [LARGE SCALE GENOMIC DNA]</scope>
    <source>
        <strain>morsitans</strain>
    </source>
</reference>
<protein>
    <recommendedName>
        <fullName evidence="2">Small ribosomal subunit protein uS12</fullName>
    </recommendedName>
    <alternativeName>
        <fullName evidence="3">30S ribosomal protein S12</fullName>
    </alternativeName>
</protein>
<keyword id="KW-0488">Methylation</keyword>
<keyword id="KW-0687">Ribonucleoprotein</keyword>
<keyword id="KW-0689">Ribosomal protein</keyword>
<keyword id="KW-0694">RNA-binding</keyword>
<keyword id="KW-0699">rRNA-binding</keyword>
<keyword id="KW-0820">tRNA-binding</keyword>
<proteinExistence type="inferred from homology"/>